<evidence type="ECO:0000250" key="1"/>
<evidence type="ECO:0000250" key="2">
    <source>
        <dbReference type="UniProtKB" id="Q9UBS4"/>
    </source>
</evidence>
<evidence type="ECO:0000255" key="3">
    <source>
        <dbReference type="PROSITE-ProRule" id="PRU00286"/>
    </source>
</evidence>
<evidence type="ECO:0000305" key="4"/>
<gene>
    <name type="primary">DNAJB11</name>
</gene>
<accession>Q3ZBA6</accession>
<protein>
    <recommendedName>
        <fullName>DnaJ homolog subfamily B member 11</fullName>
    </recommendedName>
    <alternativeName>
        <fullName>ER-associated DNAJ</fullName>
    </alternativeName>
    <alternativeName>
        <fullName>ER-associated Hsp40 co-chaperone</fullName>
    </alternativeName>
    <alternativeName>
        <fullName>Endoplasmic reticulum DNA J domain-containing protein 3</fullName>
        <shortName>ER-resident protein ERdj3</shortName>
        <shortName>ERdj3</shortName>
        <shortName>ERj3p</shortName>
    </alternativeName>
</protein>
<comment type="function">
    <text evidence="2">As a co-chaperone for HSPA5 it is required for proper folding, trafficking or degradation of proteins. Binds directly to both unfolded proteins that are substrates for ERAD and nascent unfolded peptide chains, but dissociates from the HSPA5-unfolded protein complex before folding is completed. May help recruiting HSPA5 and other chaperones to the substrate. Stimulates HSPA5 ATPase activity. It is necessary for maturation and correct trafficking of PKD1.</text>
</comment>
<comment type="subunit">
    <text evidence="1">Part of a large chaperone multiprotein complex comprising DNAJB11, HSP90B1, HSPA5, HYOU, PDIA2, PDIA4, PDIA6, PPIB, SDF2L1, UGGT1 and very small amounts of ERP29, but not, or at very low levels, CALR nor CANX. Binds to denatured substrates in an ATP-independent manner. Interacts via the J domain with HSPA5 in an ATP-dependent manner (By similarity).</text>
</comment>
<comment type="subcellular location">
    <subcellularLocation>
        <location evidence="1">Endoplasmic reticulum lumen</location>
    </subcellularLocation>
</comment>
<comment type="PTM">
    <text evidence="1">Contains high-mannose Endo H-sensitive carbohydrates.</text>
</comment>
<comment type="PTM">
    <text evidence="1">Cys-169, Cys-171, Cys-193 and Cys-196 form intramolecular disulfide bonds. The preferential partner for each Cys is not known (By similarity).</text>
</comment>
<organism>
    <name type="scientific">Bos taurus</name>
    <name type="common">Bovine</name>
    <dbReference type="NCBI Taxonomy" id="9913"/>
    <lineage>
        <taxon>Eukaryota</taxon>
        <taxon>Metazoa</taxon>
        <taxon>Chordata</taxon>
        <taxon>Craniata</taxon>
        <taxon>Vertebrata</taxon>
        <taxon>Euteleostomi</taxon>
        <taxon>Mammalia</taxon>
        <taxon>Eutheria</taxon>
        <taxon>Laurasiatheria</taxon>
        <taxon>Artiodactyla</taxon>
        <taxon>Ruminantia</taxon>
        <taxon>Pecora</taxon>
        <taxon>Bovidae</taxon>
        <taxon>Bovinae</taxon>
        <taxon>Bos</taxon>
    </lineage>
</organism>
<dbReference type="EMBL" id="BC103470">
    <property type="protein sequence ID" value="AAI03471.1"/>
    <property type="molecule type" value="mRNA"/>
</dbReference>
<dbReference type="RefSeq" id="NP_001029440.1">
    <property type="nucleotide sequence ID" value="NM_001034268.1"/>
</dbReference>
<dbReference type="RefSeq" id="XP_005201525.1">
    <property type="nucleotide sequence ID" value="XM_005201468.2"/>
</dbReference>
<dbReference type="SMR" id="Q3ZBA6"/>
<dbReference type="FunCoup" id="Q3ZBA6">
    <property type="interactions" value="3290"/>
</dbReference>
<dbReference type="STRING" id="9913.ENSBTAP00000004094"/>
<dbReference type="GlyCosmos" id="Q3ZBA6">
    <property type="glycosylation" value="1 site, No reported glycans"/>
</dbReference>
<dbReference type="GlyGen" id="Q3ZBA6">
    <property type="glycosylation" value="1 site"/>
</dbReference>
<dbReference type="PaxDb" id="9913-ENSBTAP00000004094"/>
<dbReference type="PeptideAtlas" id="Q3ZBA6"/>
<dbReference type="GeneID" id="506316"/>
<dbReference type="KEGG" id="bta:506316"/>
<dbReference type="CTD" id="51726"/>
<dbReference type="VEuPathDB" id="HostDB:ENSBTAG00000003151"/>
<dbReference type="eggNOG" id="KOG0713">
    <property type="taxonomic scope" value="Eukaryota"/>
</dbReference>
<dbReference type="HOGENOM" id="CLU_017633_0_0_1"/>
<dbReference type="InParanoid" id="Q3ZBA6"/>
<dbReference type="OMA" id="FAGRDFY"/>
<dbReference type="OrthoDB" id="550424at2759"/>
<dbReference type="TreeFam" id="TF105144"/>
<dbReference type="Proteomes" id="UP000009136">
    <property type="component" value="Chromosome 1"/>
</dbReference>
<dbReference type="Bgee" id="ENSBTAG00000003151">
    <property type="expression patterns" value="Expressed in semen and 105 other cell types or tissues"/>
</dbReference>
<dbReference type="GO" id="GO:0005783">
    <property type="term" value="C:endoplasmic reticulum"/>
    <property type="evidence" value="ECO:0000318"/>
    <property type="project" value="GO_Central"/>
</dbReference>
<dbReference type="GO" id="GO:0005788">
    <property type="term" value="C:endoplasmic reticulum lumen"/>
    <property type="evidence" value="ECO:0007669"/>
    <property type="project" value="UniProtKB-SubCell"/>
</dbReference>
<dbReference type="GO" id="GO:0051787">
    <property type="term" value="F:misfolded protein binding"/>
    <property type="evidence" value="ECO:0000318"/>
    <property type="project" value="GO_Central"/>
</dbReference>
<dbReference type="GO" id="GO:0051082">
    <property type="term" value="F:unfolded protein binding"/>
    <property type="evidence" value="ECO:0000318"/>
    <property type="project" value="GO_Central"/>
</dbReference>
<dbReference type="GO" id="GO:0006457">
    <property type="term" value="P:protein folding"/>
    <property type="evidence" value="ECO:0007669"/>
    <property type="project" value="InterPro"/>
</dbReference>
<dbReference type="GO" id="GO:0051604">
    <property type="term" value="P:protein maturation"/>
    <property type="evidence" value="ECO:0000250"/>
    <property type="project" value="UniProtKB"/>
</dbReference>
<dbReference type="CDD" id="cd06257">
    <property type="entry name" value="DnaJ"/>
    <property type="match status" value="1"/>
</dbReference>
<dbReference type="CDD" id="cd10747">
    <property type="entry name" value="DnaJ_C"/>
    <property type="match status" value="1"/>
</dbReference>
<dbReference type="FunFam" id="1.10.287.110:FF:000040">
    <property type="entry name" value="dnaJ homolog subfamily B member 11"/>
    <property type="match status" value="1"/>
</dbReference>
<dbReference type="FunFam" id="2.60.260.20:FF:000013">
    <property type="entry name" value="DnaJ subfamily B member 11"/>
    <property type="match status" value="1"/>
</dbReference>
<dbReference type="Gene3D" id="1.10.287.110">
    <property type="entry name" value="DnaJ domain"/>
    <property type="match status" value="1"/>
</dbReference>
<dbReference type="Gene3D" id="2.60.260.20">
    <property type="entry name" value="Urease metallochaperone UreE, N-terminal domain"/>
    <property type="match status" value="2"/>
</dbReference>
<dbReference type="InterPro" id="IPR051736">
    <property type="entry name" value="DnaJ-B11-like"/>
</dbReference>
<dbReference type="InterPro" id="IPR002939">
    <property type="entry name" value="DnaJ_C"/>
</dbReference>
<dbReference type="InterPro" id="IPR001623">
    <property type="entry name" value="DnaJ_domain"/>
</dbReference>
<dbReference type="InterPro" id="IPR018253">
    <property type="entry name" value="DnaJ_domain_CS"/>
</dbReference>
<dbReference type="InterPro" id="IPR008971">
    <property type="entry name" value="HSP40/DnaJ_pept-bd"/>
</dbReference>
<dbReference type="InterPro" id="IPR036869">
    <property type="entry name" value="J_dom_sf"/>
</dbReference>
<dbReference type="PANTHER" id="PTHR44298">
    <property type="entry name" value="DNAJ HOMOLOG SUBFAMILY B MEMBER 11"/>
    <property type="match status" value="1"/>
</dbReference>
<dbReference type="PANTHER" id="PTHR44298:SF1">
    <property type="entry name" value="DNAJ HOMOLOG SUBFAMILY B MEMBER 11"/>
    <property type="match status" value="1"/>
</dbReference>
<dbReference type="Pfam" id="PF00226">
    <property type="entry name" value="DnaJ"/>
    <property type="match status" value="1"/>
</dbReference>
<dbReference type="Pfam" id="PF01556">
    <property type="entry name" value="DnaJ_C"/>
    <property type="match status" value="1"/>
</dbReference>
<dbReference type="PRINTS" id="PR00625">
    <property type="entry name" value="JDOMAIN"/>
</dbReference>
<dbReference type="SMART" id="SM00271">
    <property type="entry name" value="DnaJ"/>
    <property type="match status" value="1"/>
</dbReference>
<dbReference type="SUPFAM" id="SSF46565">
    <property type="entry name" value="Chaperone J-domain"/>
    <property type="match status" value="1"/>
</dbReference>
<dbReference type="SUPFAM" id="SSF49493">
    <property type="entry name" value="HSP40/DnaJ peptide-binding domain"/>
    <property type="match status" value="2"/>
</dbReference>
<dbReference type="PROSITE" id="PS00636">
    <property type="entry name" value="DNAJ_1"/>
    <property type="match status" value="1"/>
</dbReference>
<dbReference type="PROSITE" id="PS50076">
    <property type="entry name" value="DNAJ_2"/>
    <property type="match status" value="1"/>
</dbReference>
<reference key="1">
    <citation type="submission" date="2005-08" db="EMBL/GenBank/DDBJ databases">
        <authorList>
            <consortium name="NIH - Mammalian Gene Collection (MGC) project"/>
        </authorList>
    </citation>
    <scope>NUCLEOTIDE SEQUENCE [LARGE SCALE MRNA]</scope>
    <source>
        <strain>Hereford</strain>
        <tissue>Uterus</tissue>
    </source>
</reference>
<name>DJB11_BOVIN</name>
<proteinExistence type="evidence at transcript level"/>
<feature type="signal peptide" evidence="1">
    <location>
        <begin position="1"/>
        <end position="22"/>
    </location>
</feature>
<feature type="chain" id="PRO_0000284954" description="DnaJ homolog subfamily B member 11">
    <location>
        <begin position="23"/>
        <end position="358"/>
    </location>
</feature>
<feature type="domain" description="J" evidence="3">
    <location>
        <begin position="25"/>
        <end position="90"/>
    </location>
</feature>
<feature type="modified residue" description="Phosphothreonine" evidence="2">
    <location>
        <position position="188"/>
    </location>
</feature>
<feature type="glycosylation site" description="N-linked (GlcNAc...) asparagine" evidence="4">
    <location>
        <position position="261"/>
    </location>
</feature>
<sequence length="358" mass="40504">MAPQNLGTFCLLLLYLIGTVIAGRDFYKILGVPRSASIKDIKKAYRKLALQLHPDRNPDDPRAQEKFQDLGAAYEVLSDSEKRKQYDTYGEEGLKDGHQSSHGDIFSHFFGDFGFMFGGTPRQQDRNIPRGSDIIVDLEVTLEEVYAGNFVEVVRNKPVARQAPGKRKCNCRQEMRTTQLGPGRFQMTQEVVCDECPNVKLVNEERTLEVEIEPGVRDGMEYPFIGEGEPHVDGEPGDLRFRIKVVKHSIFERRGDDLYTNVTISLVESLVGFDMDITHLDGHKVHISRDKITRPGAKLWKKGEGLPNFDNNNIKGSLIITFDVDFPKEQLSEEAREGIKQLLKQGSVQKVYNGLQGY</sequence>
<keyword id="KW-0143">Chaperone</keyword>
<keyword id="KW-1015">Disulfide bond</keyword>
<keyword id="KW-0256">Endoplasmic reticulum</keyword>
<keyword id="KW-0325">Glycoprotein</keyword>
<keyword id="KW-0597">Phosphoprotein</keyword>
<keyword id="KW-1185">Reference proteome</keyword>
<keyword id="KW-0732">Signal</keyword>